<reference key="1">
    <citation type="journal article" date="2015" name="Proc. Natl. Acad. Sci. U.S.A.">
        <title>Trichodesmium genome maintains abundant, widespread noncoding DNA in situ, despite oligotrophic lifestyle.</title>
        <authorList>
            <person name="Walworth N."/>
            <person name="Pfreundt U."/>
            <person name="Nelson W.C."/>
            <person name="Mincer T."/>
            <person name="Heidelberg J.F."/>
            <person name="Fu F."/>
            <person name="Waterbury J.B."/>
            <person name="Glavina del Rio T."/>
            <person name="Goodwin L."/>
            <person name="Kyrpides N.C."/>
            <person name="Land M.L."/>
            <person name="Woyke T."/>
            <person name="Hutchins D.A."/>
            <person name="Hess W.R."/>
            <person name="Webb E.A."/>
        </authorList>
    </citation>
    <scope>NUCLEOTIDE SEQUENCE [LARGE SCALE GENOMIC DNA]</scope>
    <source>
        <strain>IMS101</strain>
    </source>
</reference>
<keyword id="KW-0687">Ribonucleoprotein</keyword>
<keyword id="KW-0689">Ribosomal protein</keyword>
<keyword id="KW-0694">RNA-binding</keyword>
<keyword id="KW-0699">rRNA-binding</keyword>
<protein>
    <recommendedName>
        <fullName evidence="1">Large ribosomal subunit protein uL23</fullName>
    </recommendedName>
    <alternativeName>
        <fullName evidence="2">50S ribosomal protein L23</fullName>
    </alternativeName>
</protein>
<sequence length="101" mass="11811">MKLDSRDLVDIIKNPVVTEKATRLMELNQYTFDVDPRATKPMIKQVIEQIFEVKVIGINTLNLPRKKRRVGKYIGFKPRYKRAIVTLEDGEPIRKVLFPDL</sequence>
<accession>Q110A9</accession>
<proteinExistence type="inferred from homology"/>
<name>RL23_TRIEI</name>
<organism>
    <name type="scientific">Trichodesmium erythraeum (strain IMS101)</name>
    <dbReference type="NCBI Taxonomy" id="203124"/>
    <lineage>
        <taxon>Bacteria</taxon>
        <taxon>Bacillati</taxon>
        <taxon>Cyanobacteriota</taxon>
        <taxon>Cyanophyceae</taxon>
        <taxon>Oscillatoriophycideae</taxon>
        <taxon>Oscillatoriales</taxon>
        <taxon>Microcoleaceae</taxon>
        <taxon>Trichodesmium</taxon>
    </lineage>
</organism>
<dbReference type="EMBL" id="CP000393">
    <property type="protein sequence ID" value="ABG52165.1"/>
    <property type="molecule type" value="Genomic_DNA"/>
</dbReference>
<dbReference type="RefSeq" id="WP_011612520.1">
    <property type="nucleotide sequence ID" value="NC_008312.1"/>
</dbReference>
<dbReference type="SMR" id="Q110A9"/>
<dbReference type="STRING" id="203124.Tery_3010"/>
<dbReference type="KEGG" id="ter:Tery_3010"/>
<dbReference type="eggNOG" id="COG0089">
    <property type="taxonomic scope" value="Bacteria"/>
</dbReference>
<dbReference type="HOGENOM" id="CLU_037562_3_2_3"/>
<dbReference type="OrthoDB" id="9793353at2"/>
<dbReference type="GO" id="GO:1990904">
    <property type="term" value="C:ribonucleoprotein complex"/>
    <property type="evidence" value="ECO:0007669"/>
    <property type="project" value="UniProtKB-KW"/>
</dbReference>
<dbReference type="GO" id="GO:0005840">
    <property type="term" value="C:ribosome"/>
    <property type="evidence" value="ECO:0007669"/>
    <property type="project" value="UniProtKB-KW"/>
</dbReference>
<dbReference type="GO" id="GO:0019843">
    <property type="term" value="F:rRNA binding"/>
    <property type="evidence" value="ECO:0007669"/>
    <property type="project" value="UniProtKB-UniRule"/>
</dbReference>
<dbReference type="GO" id="GO:0003735">
    <property type="term" value="F:structural constituent of ribosome"/>
    <property type="evidence" value="ECO:0007669"/>
    <property type="project" value="InterPro"/>
</dbReference>
<dbReference type="GO" id="GO:0006412">
    <property type="term" value="P:translation"/>
    <property type="evidence" value="ECO:0007669"/>
    <property type="project" value="UniProtKB-UniRule"/>
</dbReference>
<dbReference type="FunFam" id="3.30.70.330:FF:000001">
    <property type="entry name" value="50S ribosomal protein L23"/>
    <property type="match status" value="1"/>
</dbReference>
<dbReference type="Gene3D" id="3.30.70.330">
    <property type="match status" value="1"/>
</dbReference>
<dbReference type="HAMAP" id="MF_01369_B">
    <property type="entry name" value="Ribosomal_uL23_B"/>
    <property type="match status" value="1"/>
</dbReference>
<dbReference type="InterPro" id="IPR012677">
    <property type="entry name" value="Nucleotide-bd_a/b_plait_sf"/>
</dbReference>
<dbReference type="InterPro" id="IPR013025">
    <property type="entry name" value="Ribosomal_uL23-like"/>
</dbReference>
<dbReference type="InterPro" id="IPR012678">
    <property type="entry name" value="Ribosomal_uL23/eL15/eS24_sf"/>
</dbReference>
<dbReference type="InterPro" id="IPR001014">
    <property type="entry name" value="Ribosomal_uL23_CS"/>
</dbReference>
<dbReference type="NCBIfam" id="NF004363">
    <property type="entry name" value="PRK05738.2-4"/>
    <property type="match status" value="1"/>
</dbReference>
<dbReference type="NCBIfam" id="NF004368">
    <property type="entry name" value="PRK05738.3-4"/>
    <property type="match status" value="1"/>
</dbReference>
<dbReference type="PANTHER" id="PTHR11620">
    <property type="entry name" value="60S RIBOSOMAL PROTEIN L23A"/>
    <property type="match status" value="1"/>
</dbReference>
<dbReference type="Pfam" id="PF00276">
    <property type="entry name" value="Ribosomal_L23"/>
    <property type="match status" value="1"/>
</dbReference>
<dbReference type="SUPFAM" id="SSF54189">
    <property type="entry name" value="Ribosomal proteins S24e, L23 and L15e"/>
    <property type="match status" value="1"/>
</dbReference>
<dbReference type="PROSITE" id="PS00050">
    <property type="entry name" value="RIBOSOMAL_L23"/>
    <property type="match status" value="1"/>
</dbReference>
<comment type="function">
    <text evidence="1">One of the early assembly proteins it binds 23S rRNA. One of the proteins that surrounds the polypeptide exit tunnel on the outside of the ribosome. Forms the main docking site for trigger factor binding to the ribosome.</text>
</comment>
<comment type="subunit">
    <text evidence="1">Part of the 50S ribosomal subunit. Contacts protein L29, and trigger factor when it is bound to the ribosome.</text>
</comment>
<comment type="similarity">
    <text evidence="1">Belongs to the universal ribosomal protein uL23 family.</text>
</comment>
<feature type="chain" id="PRO_0000272867" description="Large ribosomal subunit protein uL23">
    <location>
        <begin position="1"/>
        <end position="101"/>
    </location>
</feature>
<gene>
    <name evidence="1" type="primary">rplW</name>
    <name evidence="1" type="synonym">rpl23</name>
    <name type="ordered locus">Tery_3010</name>
</gene>
<evidence type="ECO:0000255" key="1">
    <source>
        <dbReference type="HAMAP-Rule" id="MF_01369"/>
    </source>
</evidence>
<evidence type="ECO:0000305" key="2"/>